<gene>
    <name type="primary">XDH</name>
    <name type="synonym">XDHA</name>
</gene>
<comment type="function">
    <text evidence="8">Key enzyme in purine degradation. Catalyzes the oxidation of hypoxanthine to xanthine. Catalyzes the oxidation of xanthine to uric acid. Contributes to the generation of reactive oxygen species. Has also low oxidase activity towards aldehydes (in vitro).</text>
</comment>
<comment type="catalytic activity">
    <reaction evidence="10">
        <text>xanthine + NAD(+) + H2O = urate + NADH + H(+)</text>
        <dbReference type="Rhea" id="RHEA:16669"/>
        <dbReference type="ChEBI" id="CHEBI:15377"/>
        <dbReference type="ChEBI" id="CHEBI:15378"/>
        <dbReference type="ChEBI" id="CHEBI:17712"/>
        <dbReference type="ChEBI" id="CHEBI:17775"/>
        <dbReference type="ChEBI" id="CHEBI:57540"/>
        <dbReference type="ChEBI" id="CHEBI:57945"/>
        <dbReference type="EC" id="1.17.1.4"/>
    </reaction>
</comment>
<comment type="catalytic activity">
    <reaction evidence="10">
        <text>hypoxanthine + NAD(+) + H2O = xanthine + NADH + H(+)</text>
        <dbReference type="Rhea" id="RHEA:24670"/>
        <dbReference type="ChEBI" id="CHEBI:15377"/>
        <dbReference type="ChEBI" id="CHEBI:15378"/>
        <dbReference type="ChEBI" id="CHEBI:17368"/>
        <dbReference type="ChEBI" id="CHEBI:17712"/>
        <dbReference type="ChEBI" id="CHEBI:57540"/>
        <dbReference type="ChEBI" id="CHEBI:57945"/>
        <dbReference type="EC" id="1.17.1.4"/>
    </reaction>
</comment>
<comment type="catalytic activity">
    <reaction evidence="8 10">
        <text>xanthine + O2 + H2O = urate + H2O2</text>
        <dbReference type="Rhea" id="RHEA:21132"/>
        <dbReference type="ChEBI" id="CHEBI:15377"/>
        <dbReference type="ChEBI" id="CHEBI:15379"/>
        <dbReference type="ChEBI" id="CHEBI:16240"/>
        <dbReference type="ChEBI" id="CHEBI:17712"/>
        <dbReference type="ChEBI" id="CHEBI:17775"/>
        <dbReference type="EC" id="1.17.3.2"/>
    </reaction>
</comment>
<comment type="cofactor">
    <cofactor evidence="8">
        <name>[2Fe-2S] cluster</name>
        <dbReference type="ChEBI" id="CHEBI:190135"/>
    </cofactor>
    <text evidence="8">Binds 2 [2Fe-2S] clusters.</text>
</comment>
<comment type="cofactor">
    <cofactor evidence="8">
        <name>FAD</name>
        <dbReference type="ChEBI" id="CHEBI:57692"/>
    </cofactor>
</comment>
<comment type="cofactor">
    <cofactor evidence="8">
        <name>Mo-molybdopterin</name>
        <dbReference type="ChEBI" id="CHEBI:71302"/>
    </cofactor>
    <text evidence="8">Binds 1 Mo-molybdopterin (Mo-MPT) cofactor per subunit.</text>
</comment>
<comment type="activity regulation">
    <text evidence="1">Can be converted from the dehydrogenase form (D) to the oxidase form (O) irreversibly by proteolysis or reversibly through the oxidation of sulfhydryl groups.</text>
</comment>
<comment type="subunit">
    <text evidence="1">Homodimer. Interacts with BTN1A1 (By similarity).</text>
</comment>
<comment type="interaction">
    <interactant intactId="EBI-2557331">
        <id>P47989</id>
    </interactant>
    <interactant intactId="EBI-12193965">
        <id>Q9Y3R0-3</id>
        <label>GRIP1</label>
    </interactant>
    <organismsDiffer>false</organismsDiffer>
    <experiments>3</experiments>
</comment>
<comment type="subcellular location">
    <subcellularLocation>
        <location evidence="1">Cytoplasm</location>
    </subcellularLocation>
    <subcellularLocation>
        <location evidence="1">Peroxisome</location>
    </subcellularLocation>
    <subcellularLocation>
        <location>Secreted</location>
    </subcellularLocation>
</comment>
<comment type="tissue specificity">
    <text evidence="12">Detected in milk (at protein level).</text>
</comment>
<comment type="PTM">
    <text evidence="1">Subject to partial proteolysis; this alters the enzyme from the dehydrogenase form (D) to the oxidase form (O).</text>
</comment>
<comment type="PTM">
    <text evidence="1">Contains sulfhydryl groups that are easily oxidized (in vitro); this alters the enzyme from the dehydrogenase form (D) to the oxidase form (O).</text>
</comment>
<comment type="disease" evidence="4 5 6 11">
    <disease id="DI-01153">
        <name>Xanthinuria 1</name>
        <acronym>XAN1</acronym>
        <description>A disorder characterized by excretion of very large amounts of xanthine in the urine and a tendency to form xanthine stones. Uric acid is strikingly diminished in serum and urine. XAN1 is due to isolated xanthine dehydrogenase deficiency. Patients can metabolize allopurinol.</description>
        <dbReference type="MIM" id="278300"/>
    </disease>
    <text>The disease is caused by variants affecting the gene represented in this entry.</text>
</comment>
<comment type="similarity">
    <text evidence="14">Belongs to the xanthine dehydrogenase family.</text>
</comment>
<name>XDH_HUMAN</name>
<protein>
    <recommendedName>
        <fullName>Xanthine dehydrogenase/oxidase</fullName>
    </recommendedName>
    <domain>
        <recommendedName>
            <fullName>Xanthine dehydrogenase</fullName>
            <shortName>XD</shortName>
            <ecNumber evidence="10">1.17.1.4</ecNumber>
        </recommendedName>
    </domain>
    <domain>
        <recommendedName>
            <fullName>Xanthine oxidase</fullName>
            <shortName>XO</shortName>
            <ecNumber evidence="8 10">1.17.3.2</ecNumber>
        </recommendedName>
        <alternativeName>
            <fullName>Xanthine oxidoreductase</fullName>
            <shortName>XOR</shortName>
        </alternativeName>
    </domain>
</protein>
<sequence>MTADKLVFFVNGRKVVEKNADPETTLLAYLRRKLGLSGTKLGCGEGGCGACTVMLSKYDRLQNKIVHFSANACLAPICSLHHVAVTTVEGIGSTKTRLHPVQERIAKSHGSQCGFCTPGIVMSMYTLLRNQPEPTMEEIENAFQGNLCRCTGYRPILQGFRTFARDGGCCGGDGNNPNCCMNQKKDHSVSLSPSLFKPEEFTPLDPTQEPIFPPELLRLKDTPRKQLRFEGERVTWIQASTLKELLDLKAQHPDAKLVVGNTEIGIEMKFKNMLFPMIVCPAWIPELNSVEHGPDGISFGAACPLSIVEKTLVDAVAKLPAQKTEVFRGVLEQLRWFAGKQVKSVASVGGNIITASPISDLNPVFMASGAKLTLVSRGTRRTVQMDHTFFPGYRKTLLSPEEILLSIEIPYSREGEYFSAFKQASRREDDIAKVTSGMRVLFKPGTTEVQELALCYGGMANRTISALKTTQRQLSKLWKEELLQDVCAGLAEELHLPPDAPGGMVDFRCTLTLSFFFKFYLTVLQKLGQENLEDKCGKLDPTFASATLLFQKDPPADVQLFQEVPKGQSEEDMVGRPLPHLAADMQASGEAVYCDDIPRYENELSLRLVTSTRAHAKIKSIDTSEAKKVPGFVCFISADDVPGSNITGICNDETVFAKDKVTCVGHIIGAVVADTPEHTQRAAQGVKITYEELPAIITIEDAIKNNSFYGPELKIEKGDLKKGFSEADNVVSGEIYIGGQEHFYLETHCTIAVPKGEAGEMELFVSTQNTMKTQSFVAKMLGVPANRIVVRVKRMGGGFGGKETRSTVVSTAVALAAYKTGRPVRCMLDRDEDMLITGGRHPFLARYKVGFMKTGTVVALEVDHFSNVGNTQDLSQSIMERALFHMDNCYKIPNIRGTGRLCKTNLPSNTAFRGFGGPQGMLIAECWMSEVAVTCGMPAEEVRRKNLYKEGDLTHFNQKLEGFTLPRCWEECLASSQYHARKSEVDKFNKENCWKKRGLCIIPTKFGISFTVPFLNQAGALLHVYTDGSVLLTHGGTEMGQGLHTKMVQVASRALKIPTSKIYISETSTNTVPNTSPTAASVSADLNGQAVYAACQTILKRLEPYKKKNPSGSWEDWVTAAYMDTVSLSATGFYRTPNLGYSFETNSGNPFHYFSYGVACSEVEIDCLTGDHKNLRTDIVMDVGSSLNPAIDIGQVEGAFVQGLGLFTLEELHYSPEGSLHTRGPSTYKIPAFGSIPIEFRVSLLRDCPNKKAIYASKAVGEPPLFLAASIFFAIKDAIRAARAQHTGNNVKELFRLDSPATPEKIRNACVDKFTTLCVTGVPENCKPWSVRV</sequence>
<accession>P47989</accession>
<accession>Q16681</accession>
<accession>Q16712</accession>
<accession>Q4PJ16</accession>
<reference key="1">
    <citation type="journal article" date="1993" name="Gene">
        <title>Cloning of the cDNA encoding human xanthine dehydrogenase (oxidase): structural analysis of the protein and chromosomal location of the gene.</title>
        <authorList>
            <person name="Ichida K."/>
            <person name="Amaya Y."/>
            <person name="Noda K."/>
            <person name="Minoshima S."/>
            <person name="Hosoya T."/>
            <person name="Sakai O."/>
            <person name="Shimizu N."/>
            <person name="Nishino T."/>
        </authorList>
    </citation>
    <scope>NUCLEOTIDE SEQUENCE [MRNA]</scope>
    <source>
        <tissue>Liver</tissue>
    </source>
</reference>
<reference key="2">
    <citation type="submission" date="2000-09" db="EMBL/GenBank/DDBJ databases">
        <authorList>
            <person name="Ichida K."/>
        </authorList>
    </citation>
    <scope>SEQUENCE REVISION TO 191; 231 AND 1150</scope>
</reference>
<reference key="3">
    <citation type="journal article" date="1994" name="Biochem. Biophys. Res. Commun.">
        <title>Molecular cloning, tissue expression of human xanthine dehydrogenase.</title>
        <authorList>
            <person name="Xu P."/>
            <person name="Huecksteadt T.P."/>
            <person name="Harrison R."/>
            <person name="Hoidal J.R."/>
        </authorList>
    </citation>
    <scope>NUCLEOTIDE SEQUENCE [MRNA]</scope>
    <scope>VARIANT ARG-172</scope>
    <source>
        <tissue>Liver</tissue>
    </source>
</reference>
<reference key="4">
    <citation type="journal article" date="1995" name="Biochem. Biophys. Res. Commun.">
        <authorList>
            <person name="Xu P."/>
            <person name="Huecksteadt T.P."/>
            <person name="Harrison R."/>
            <person name="Hoidal J.R."/>
        </authorList>
    </citation>
    <scope>ERRATUM OF PUBMED:8135849</scope>
</reference>
<reference key="5">
    <citation type="journal article" date="1996" name="Biochem. J.">
        <title>Cloning and expression in vitro of human xanthine dehydrogenase/oxidase.</title>
        <authorList>
            <person name="Saksela M."/>
            <person name="Raivio K.O."/>
        </authorList>
    </citation>
    <scope>NUCLEOTIDE SEQUENCE [MRNA]</scope>
    <scope>CATALYTIC ACTIVITY</scope>
    <source>
        <tissue>Small intestine</tissue>
    </source>
</reference>
<reference key="6">
    <citation type="submission" date="2005-06" db="EMBL/GenBank/DDBJ databases">
        <authorList>
            <consortium name="NIEHS SNPs program"/>
        </authorList>
    </citation>
    <scope>NUCLEOTIDE SEQUENCE [GENOMIC DNA]</scope>
    <scope>VARIANTS LYS-133; ARG-172; MET-235; MET-395; SER-555; ALA-584; GLN-607; ASN-617; ILE-623; VAL-646; VAL-703; MET-910; LEU-1091; THR-1109; CYS-1176 AND TRP-1296</scope>
</reference>
<reference key="7">
    <citation type="journal article" date="1997" name="J. Clin. Invest.">
        <title>Identification of two mutations in human xanthine dehydrogenase gene responsible for classical type I xanthinuria.</title>
        <authorList>
            <person name="Ichida K."/>
            <person name="Amaya Y."/>
            <person name="Kamatani N."/>
            <person name="Nishino T."/>
            <person name="Hosoya T."/>
            <person name="Sakai O."/>
        </authorList>
    </citation>
    <scope>INVOLVEMENT IN XAN1</scope>
    <scope>VARIANT ARG-1150</scope>
</reference>
<reference key="8">
    <citation type="journal article" date="2000" name="Kidney Int.">
        <title>XDH gene mutation is the underlying cause of classical xanthinuria: a second report.</title>
        <authorList>
            <person name="Levartovsky D."/>
            <person name="Lagziel A."/>
            <person name="Sperling O."/>
            <person name="Liberman U."/>
            <person name="Yaron M."/>
            <person name="Hosoya T."/>
            <person name="Ichida K."/>
            <person name="Peretz H."/>
        </authorList>
    </citation>
    <scope>INVOLVEMENT IN XAN1</scope>
</reference>
<reference key="9">
    <citation type="journal article" date="2008" name="Proteomics">
        <title>Identification of N-linked glycoproteins in human milk by hydrophilic interaction liquid chromatography and mass spectrometry.</title>
        <authorList>
            <person name="Picariello G."/>
            <person name="Ferranti P."/>
            <person name="Mamone G."/>
            <person name="Roepstorff P."/>
            <person name="Addeo F."/>
        </authorList>
    </citation>
    <scope>IDENTIFICATION BY MASS SPECTROMETRY</scope>
    <source>
        <tissue>Milk</tissue>
    </source>
</reference>
<reference key="10">
    <citation type="journal article" date="2014" name="J. Proteomics">
        <title>An enzyme assisted RP-RPLC approach for in-depth analysis of human liver phosphoproteome.</title>
        <authorList>
            <person name="Bian Y."/>
            <person name="Song C."/>
            <person name="Cheng K."/>
            <person name="Dong M."/>
            <person name="Wang F."/>
            <person name="Huang J."/>
            <person name="Sun D."/>
            <person name="Wang L."/>
            <person name="Ye M."/>
            <person name="Zou H."/>
        </authorList>
    </citation>
    <scope>IDENTIFICATION BY MASS SPECTROMETRY [LARGE SCALE ANALYSIS]</scope>
    <source>
        <tissue>Liver</tissue>
    </source>
</reference>
<reference key="11">
    <citation type="journal article" date="2007" name="J. Biochem.">
        <title>Human xanthine oxidase changes its substrate specificity to aldehyde oxidase type upon mutation of amino acid residues in the active site: roles of active site residues in binding and activation of purine substrate.</title>
        <authorList>
            <person name="Yamaguchi Y."/>
            <person name="Matsumura T."/>
            <person name="Ichida K."/>
            <person name="Okamoto K."/>
            <person name="Nishino T."/>
        </authorList>
    </citation>
    <scope>X-RAY CRYSTALLOGRAPHY (2.60 ANGSTROMS) OF MUTANT VAL-803 IN COMPLEX WITH FAD; 2FE-2S IRON-SULFUR CENTERS; SALICYLATE; MOLYBDOPTERIN AND CALCIUM IONS</scope>
    <scope>COFACTOR</scope>
    <scope>CATALYTIC ACTIVITY</scope>
    <scope>FUNCTION</scope>
    <scope>SUBUNIT</scope>
</reference>
<reference key="12">
    <citation type="submission" date="2009-02" db="PDB data bank">
        <title>Human milk xanthine dehydrogenase is incompletely converted to the oxidase form in the absence of proteolysis. A structural explanation.</title>
        <authorList>
            <person name="Pearson A.R."/>
            <person name="Godber B.L.J."/>
            <person name="Eisenthal R."/>
            <person name="Taylor G.L."/>
            <person name="Harrison R."/>
        </authorList>
    </citation>
    <scope>X-RAY CRYSTALLOGRAPHY (3.59 ANGSTROMS) IN COMPLEX WITH FAD AND IRON-SULFUR CENTERS</scope>
    <scope>TISSUE SPECIFICITY</scope>
    <scope>ACTIVITY REGULATION</scope>
    <scope>DISULFIDE BONDS</scope>
</reference>
<reference key="13">
    <citation type="journal article" date="2001" name="Hum. Genet.">
        <title>Identification of a new point mutation in the human xanthine dehydrogenase gene responsible for a case of classical type I xanthinuria.</title>
        <authorList>
            <person name="Sakamoto N."/>
            <person name="Yamamoto T."/>
            <person name="Moriwaki Y."/>
            <person name="Teranishi T."/>
            <person name="Toyoda M."/>
            <person name="Onishi Y."/>
            <person name="Kuroda S."/>
            <person name="Sakaguchi K."/>
            <person name="Fujisawa T."/>
            <person name="Maeda M."/>
            <person name="Hada T."/>
        </authorList>
    </citation>
    <scope>VARIANT XAN1 CYS-149</scope>
</reference>
<reference key="14">
    <citation type="journal article" date="2003" name="Nephrol. Dial. Transplant.">
        <title>Mutational analysis of the xanthine dehydrogenase gene in a Turkish family with autosomal recessive classical xanthinuria.</title>
        <authorList>
            <person name="Gok F."/>
            <person name="Ichida K."/>
            <person name="Topaloglu R."/>
        </authorList>
    </citation>
    <scope>INVOLVEMENT IN XAN1</scope>
</reference>
<reference key="15">
    <citation type="journal article" date="2006" name="Science">
        <title>The consensus coding sequences of human breast and colorectal cancers.</title>
        <authorList>
            <person name="Sjoeblom T."/>
            <person name="Jones S."/>
            <person name="Wood L.D."/>
            <person name="Parsons D.W."/>
            <person name="Lin J."/>
            <person name="Barber T.D."/>
            <person name="Mandelker D."/>
            <person name="Leary R.J."/>
            <person name="Ptak J."/>
            <person name="Silliman N."/>
            <person name="Szabo S."/>
            <person name="Buckhaults P."/>
            <person name="Farrell C."/>
            <person name="Meeh P."/>
            <person name="Markowitz S.D."/>
            <person name="Willis J."/>
            <person name="Dawson D."/>
            <person name="Willson J.K.V."/>
            <person name="Gazdar A.F."/>
            <person name="Hartigan J."/>
            <person name="Wu L."/>
            <person name="Liu C."/>
            <person name="Parmigiani G."/>
            <person name="Park B.H."/>
            <person name="Bachman K.E."/>
            <person name="Papadopoulos N."/>
            <person name="Vogelstein B."/>
            <person name="Kinzler K.W."/>
            <person name="Velculescu V.E."/>
        </authorList>
    </citation>
    <scope>VARIANTS [LARGE SCALE ANALYSIS] PHE-763 AND GLY-791</scope>
</reference>
<keyword id="KW-0001">2Fe-2S</keyword>
<keyword id="KW-0002">3D-structure</keyword>
<keyword id="KW-0963">Cytoplasm</keyword>
<keyword id="KW-0225">Disease variant</keyword>
<keyword id="KW-1015">Disulfide bond</keyword>
<keyword id="KW-0274">FAD</keyword>
<keyword id="KW-0285">Flavoprotein</keyword>
<keyword id="KW-0408">Iron</keyword>
<keyword id="KW-0411">Iron-sulfur</keyword>
<keyword id="KW-0479">Metal-binding</keyword>
<keyword id="KW-0500">Molybdenum</keyword>
<keyword id="KW-0520">NAD</keyword>
<keyword id="KW-0560">Oxidoreductase</keyword>
<keyword id="KW-0576">Peroxisome</keyword>
<keyword id="KW-1267">Proteomics identification</keyword>
<keyword id="KW-1185">Reference proteome</keyword>
<keyword id="KW-0964">Secreted</keyword>
<feature type="chain" id="PRO_0000166084" description="Xanthine dehydrogenase/oxidase">
    <location>
        <begin position="1"/>
        <end position="1333"/>
    </location>
</feature>
<feature type="domain" description="2Fe-2S ferredoxin-type" evidence="2">
    <location>
        <begin position="4"/>
        <end position="91"/>
    </location>
</feature>
<feature type="domain" description="FAD-binding PCMH-type" evidence="3">
    <location>
        <begin position="229"/>
        <end position="414"/>
    </location>
</feature>
<feature type="active site" description="Proton acceptor">
    <location>
        <position position="1262"/>
    </location>
</feature>
<feature type="binding site">
    <location>
        <position position="43"/>
    </location>
    <ligand>
        <name>[2Fe-2S] cluster</name>
        <dbReference type="ChEBI" id="CHEBI:190135"/>
        <label>1</label>
    </ligand>
</feature>
<feature type="binding site">
    <location>
        <position position="48"/>
    </location>
    <ligand>
        <name>[2Fe-2S] cluster</name>
        <dbReference type="ChEBI" id="CHEBI:190135"/>
        <label>1</label>
    </ligand>
</feature>
<feature type="binding site">
    <location>
        <position position="51"/>
    </location>
    <ligand>
        <name>[2Fe-2S] cluster</name>
        <dbReference type="ChEBI" id="CHEBI:190135"/>
        <label>1</label>
    </ligand>
</feature>
<feature type="binding site">
    <location>
        <position position="73"/>
    </location>
    <ligand>
        <name>[2Fe-2S] cluster</name>
        <dbReference type="ChEBI" id="CHEBI:190135"/>
        <label>1</label>
    </ligand>
</feature>
<feature type="binding site">
    <location>
        <position position="113"/>
    </location>
    <ligand>
        <name>[2Fe-2S] cluster</name>
        <dbReference type="ChEBI" id="CHEBI:190135"/>
        <label>2</label>
    </ligand>
</feature>
<feature type="binding site">
    <location>
        <position position="116"/>
    </location>
    <ligand>
        <name>[2Fe-2S] cluster</name>
        <dbReference type="ChEBI" id="CHEBI:190135"/>
        <label>2</label>
    </ligand>
</feature>
<feature type="binding site">
    <location>
        <position position="148"/>
    </location>
    <ligand>
        <name>[2Fe-2S] cluster</name>
        <dbReference type="ChEBI" id="CHEBI:190135"/>
        <label>2</label>
    </ligand>
</feature>
<feature type="binding site">
    <location>
        <position position="150"/>
    </location>
    <ligand>
        <name>[2Fe-2S] cluster</name>
        <dbReference type="ChEBI" id="CHEBI:190135"/>
        <label>2</label>
    </ligand>
</feature>
<feature type="binding site" evidence="8 12">
    <location>
        <begin position="257"/>
        <end position="264"/>
    </location>
    <ligand>
        <name>FAD</name>
        <dbReference type="ChEBI" id="CHEBI:57692"/>
    </ligand>
</feature>
<feature type="binding site" evidence="8 12">
    <location>
        <position position="337"/>
    </location>
    <ligand>
        <name>FAD</name>
        <dbReference type="ChEBI" id="CHEBI:57692"/>
    </ligand>
</feature>
<feature type="binding site" evidence="8 12">
    <location>
        <begin position="347"/>
        <end position="351"/>
    </location>
    <ligand>
        <name>FAD</name>
        <dbReference type="ChEBI" id="CHEBI:57692"/>
    </ligand>
</feature>
<feature type="binding site" evidence="8 12">
    <location>
        <position position="360"/>
    </location>
    <ligand>
        <name>FAD</name>
        <dbReference type="ChEBI" id="CHEBI:57692"/>
    </ligand>
</feature>
<feature type="binding site" evidence="1">
    <location>
        <position position="404"/>
    </location>
    <ligand>
        <name>FAD</name>
        <dbReference type="ChEBI" id="CHEBI:57692"/>
    </ligand>
</feature>
<feature type="binding site" evidence="8 12">
    <location>
        <position position="422"/>
    </location>
    <ligand>
        <name>FAD</name>
        <dbReference type="ChEBI" id="CHEBI:57692"/>
    </ligand>
</feature>
<feature type="binding site">
    <location>
        <position position="768"/>
    </location>
    <ligand>
        <name>Mo-molybdopterin</name>
        <dbReference type="ChEBI" id="CHEBI:71302"/>
    </ligand>
    <ligandPart>
        <name>Mo</name>
        <dbReference type="ChEBI" id="CHEBI:28685"/>
    </ligandPart>
</feature>
<feature type="binding site">
    <location>
        <position position="799"/>
    </location>
    <ligand>
        <name>Mo-molybdopterin</name>
        <dbReference type="ChEBI" id="CHEBI:71302"/>
    </ligand>
    <ligandPart>
        <name>Mo</name>
        <dbReference type="ChEBI" id="CHEBI:28685"/>
    </ligandPart>
</feature>
<feature type="binding site" evidence="1">
    <location>
        <position position="803"/>
    </location>
    <ligand>
        <name>substrate</name>
    </ligand>
</feature>
<feature type="binding site">
    <location>
        <position position="881"/>
    </location>
    <ligand>
        <name>substrate</name>
    </ligand>
</feature>
<feature type="binding site">
    <location>
        <position position="913"/>
    </location>
    <ligand>
        <name>Mo-molybdopterin</name>
        <dbReference type="ChEBI" id="CHEBI:71302"/>
    </ligand>
    <ligandPart>
        <name>Mo</name>
        <dbReference type="ChEBI" id="CHEBI:28685"/>
    </ligandPart>
</feature>
<feature type="binding site" evidence="1">
    <location>
        <position position="915"/>
    </location>
    <ligand>
        <name>substrate</name>
    </ligand>
</feature>
<feature type="binding site">
    <location>
        <position position="1011"/>
    </location>
    <ligand>
        <name>substrate</name>
    </ligand>
</feature>
<feature type="binding site">
    <location>
        <position position="1080"/>
    </location>
    <ligand>
        <name>Mo-molybdopterin</name>
        <dbReference type="ChEBI" id="CHEBI:71302"/>
    </ligand>
    <ligandPart>
        <name>Mo</name>
        <dbReference type="ChEBI" id="CHEBI:28685"/>
    </ligandPart>
</feature>
<feature type="disulfide bond" description="In oxidase form" evidence="12">
    <location>
        <begin position="509"/>
        <end position="1318"/>
    </location>
</feature>
<feature type="disulfide bond" description="In oxidase form" evidence="12">
    <location>
        <begin position="536"/>
        <end position="993"/>
    </location>
</feature>
<feature type="sequence variant" id="VAR_023976" description="In dbSNP:rs45447191." evidence="13">
    <original>E</original>
    <variation>K</variation>
    <location>
        <position position="133"/>
    </location>
</feature>
<feature type="sequence variant" id="VAR_045900" description="In XAN1; dbSNP:rs72549369." evidence="5">
    <original>R</original>
    <variation>C</variation>
    <location>
        <position position="149"/>
    </location>
</feature>
<feature type="sequence variant" id="VAR_023977" description="In dbSNP:rs45523133." evidence="9 13">
    <original>G</original>
    <variation>R</variation>
    <location>
        <position position="172"/>
    </location>
</feature>
<feature type="sequence variant" id="VAR_023978" description="In dbSNP:rs45469499." evidence="13">
    <original>T</original>
    <variation>M</variation>
    <location>
        <position position="235"/>
    </location>
</feature>
<feature type="sequence variant" id="VAR_023979" description="In dbSNP:rs34929837." evidence="13">
    <original>K</original>
    <variation>M</variation>
    <location>
        <position position="395"/>
    </location>
</feature>
<feature type="sequence variant" id="VAR_023980" description="In dbSNP:rs45577338." evidence="13">
    <original>P</original>
    <variation>S</variation>
    <location>
        <position position="555"/>
    </location>
</feature>
<feature type="sequence variant" id="VAR_023981" description="In dbSNP:rs45491693." evidence="13">
    <original>D</original>
    <variation>A</variation>
    <location>
        <position position="584"/>
    </location>
</feature>
<feature type="sequence variant" id="VAR_023982" description="In dbSNP:rs45442092." evidence="13">
    <original>R</original>
    <variation>Q</variation>
    <location>
        <position position="607"/>
    </location>
</feature>
<feature type="sequence variant" id="VAR_023983" description="In dbSNP:rs45442398." evidence="13">
    <original>K</original>
    <variation>N</variation>
    <location>
        <position position="617"/>
    </location>
</feature>
<feature type="sequence variant" id="VAR_023984" description="In dbSNP:rs45448694." evidence="13">
    <original>T</original>
    <variation>I</variation>
    <location>
        <position position="623"/>
    </location>
</feature>
<feature type="sequence variant" id="VAR_023985" description="In dbSNP:rs17323225." evidence="13">
    <original>I</original>
    <variation>V</variation>
    <location>
        <position position="646"/>
    </location>
</feature>
<feature type="sequence variant" id="VAR_023986" description="In dbSNP:rs17011368." evidence="13">
    <original>I</original>
    <variation>V</variation>
    <location>
        <position position="703"/>
    </location>
</feature>
<feature type="sequence variant" id="VAR_035899" description="In a breast cancer sample; somatic mutation." evidence="7">
    <original>L</original>
    <variation>F</variation>
    <location>
        <position position="763"/>
    </location>
</feature>
<feature type="sequence variant" id="VAR_035900" description="In a breast cancer sample; somatic mutation; dbSNP:rs775646772." evidence="7">
    <original>R</original>
    <variation>G</variation>
    <location>
        <position position="791"/>
    </location>
</feature>
<feature type="sequence variant" id="VAR_023987" description="In dbSNP:rs669884." evidence="13">
    <original>T</original>
    <variation>M</variation>
    <location>
        <position position="910"/>
    </location>
</feature>
<feature type="sequence variant" id="VAR_023988" description="In dbSNP:rs45619033." evidence="13">
    <original>V</original>
    <variation>L</variation>
    <location>
        <position position="1091"/>
    </location>
</feature>
<feature type="sequence variant" id="VAR_023989" description="In dbSNP:rs45547640." evidence="13">
    <original>N</original>
    <variation>T</variation>
    <location>
        <position position="1109"/>
    </location>
</feature>
<feature type="sequence variant" id="VAR_045901" description="In dbSNP:rs1042036." evidence="11">
    <original>P</original>
    <variation>R</variation>
    <location>
        <position position="1150"/>
    </location>
</feature>
<feature type="sequence variant" id="VAR_023990" description="In dbSNP:rs45624433." evidence="13">
    <original>R</original>
    <variation>C</variation>
    <location>
        <position position="1176"/>
    </location>
</feature>
<feature type="sequence variant" id="VAR_023991" description="In dbSNP:rs45564939." evidence="13">
    <original>R</original>
    <variation>W</variation>
    <location>
        <position position="1296"/>
    </location>
</feature>
<feature type="mutagenesis site" description="Strongly decreased activity towards xanthine and hypoxanthine. Increased affinity and activity towards aromatic aldehydes.">
    <original>E</original>
    <variation>V</variation>
    <location>
        <position position="803"/>
    </location>
</feature>
<feature type="mutagenesis site" description="Abolishes xanthine oxidase activity.">
    <original>R</original>
    <variation>M</variation>
    <location>
        <position position="881"/>
    </location>
</feature>
<feature type="sequence conflict" description="In Ref. 3; AAA75287." evidence="14" ref="3">
    <original>V</original>
    <variation>E</variation>
    <location>
        <position position="259"/>
    </location>
</feature>
<feature type="sequence conflict" description="In Ref. 3; AAA75287." evidence="14" ref="3">
    <original>QL</original>
    <variation>HV</variation>
    <location>
        <begin position="333"/>
        <end position="334"/>
    </location>
</feature>
<feature type="sequence conflict" description="In Ref. 3; AAA75287." evidence="14" ref="3">
    <original>H</original>
    <variation>Q</variation>
    <location>
        <position position="495"/>
    </location>
</feature>
<feature type="sequence conflict" description="In Ref. 3; AAA75287." evidence="14" ref="3">
    <original>FFF</original>
    <variation>LLL</variation>
    <location>
        <begin position="515"/>
        <end position="517"/>
    </location>
</feature>
<feature type="strand" evidence="15">
    <location>
        <begin position="6"/>
        <end position="10"/>
    </location>
</feature>
<feature type="strand" evidence="15">
    <location>
        <begin position="13"/>
        <end position="17"/>
    </location>
</feature>
<feature type="helix" evidence="15">
    <location>
        <begin position="26"/>
        <end position="32"/>
    </location>
</feature>
<feature type="strand" evidence="15">
    <location>
        <begin position="44"/>
        <end position="48"/>
    </location>
</feature>
<feature type="strand" evidence="15">
    <location>
        <begin position="52"/>
        <end position="59"/>
    </location>
</feature>
<feature type="turn" evidence="15">
    <location>
        <begin position="60"/>
        <end position="63"/>
    </location>
</feature>
<feature type="strand" evidence="15">
    <location>
        <begin position="64"/>
        <end position="71"/>
    </location>
</feature>
<feature type="turn" evidence="15">
    <location>
        <begin position="72"/>
        <end position="74"/>
    </location>
</feature>
<feature type="helix" evidence="15">
    <location>
        <begin position="77"/>
        <end position="79"/>
    </location>
</feature>
<feature type="strand" evidence="15">
    <location>
        <begin position="84"/>
        <end position="86"/>
    </location>
</feature>
<feature type="helix" evidence="15">
    <location>
        <begin position="88"/>
        <end position="90"/>
    </location>
</feature>
<feature type="helix" evidence="15">
    <location>
        <begin position="100"/>
        <end position="107"/>
    </location>
</feature>
<feature type="helix" evidence="15">
    <location>
        <begin position="117"/>
        <end position="130"/>
    </location>
</feature>
<feature type="helix" evidence="15">
    <location>
        <begin position="136"/>
        <end position="141"/>
    </location>
</feature>
<feature type="turn" evidence="15">
    <location>
        <begin position="142"/>
        <end position="145"/>
    </location>
</feature>
<feature type="strand" evidence="15">
    <location>
        <begin position="149"/>
        <end position="151"/>
    </location>
</feature>
<feature type="helix" evidence="15">
    <location>
        <begin position="154"/>
        <end position="160"/>
    </location>
</feature>
<feature type="helix" evidence="15">
    <location>
        <begin position="161"/>
        <end position="163"/>
    </location>
</feature>
<feature type="helix" evidence="15">
    <location>
        <begin position="198"/>
        <end position="200"/>
    </location>
</feature>
<feature type="helix" evidence="15">
    <location>
        <begin position="206"/>
        <end position="208"/>
    </location>
</feature>
<feature type="helix" evidence="15">
    <location>
        <begin position="214"/>
        <end position="218"/>
    </location>
</feature>
<feature type="strand" evidence="15">
    <location>
        <begin position="227"/>
        <end position="230"/>
    </location>
</feature>
<feature type="strand" evidence="15">
    <location>
        <begin position="235"/>
        <end position="238"/>
    </location>
</feature>
<feature type="helix" evidence="15">
    <location>
        <begin position="242"/>
        <end position="251"/>
    </location>
</feature>
<feature type="helix" evidence="15">
    <location>
        <begin position="264"/>
        <end position="270"/>
    </location>
</feature>
<feature type="strand" evidence="15">
    <location>
        <begin position="276"/>
        <end position="280"/>
    </location>
</feature>
<feature type="helix" evidence="15">
    <location>
        <begin position="285"/>
        <end position="288"/>
    </location>
</feature>
<feature type="strand" evidence="15">
    <location>
        <begin position="290"/>
        <end position="292"/>
    </location>
</feature>
<feature type="strand" evidence="15">
    <location>
        <begin position="294"/>
        <end position="300"/>
    </location>
</feature>
<feature type="helix" evidence="15">
    <location>
        <begin position="305"/>
        <end position="318"/>
    </location>
</feature>
<feature type="helix" evidence="15">
    <location>
        <begin position="321"/>
        <end position="323"/>
    </location>
</feature>
<feature type="helix" evidence="15">
    <location>
        <begin position="325"/>
        <end position="335"/>
    </location>
</feature>
<feature type="helix" evidence="15">
    <location>
        <begin position="340"/>
        <end position="345"/>
    </location>
</feature>
<feature type="helix" evidence="15">
    <location>
        <begin position="348"/>
        <end position="354"/>
    </location>
</feature>
<feature type="helix" evidence="15">
    <location>
        <begin position="362"/>
        <end position="367"/>
    </location>
</feature>
<feature type="strand" evidence="15">
    <location>
        <begin position="371"/>
        <end position="375"/>
    </location>
</feature>
<feature type="strand" evidence="15">
    <location>
        <begin position="380"/>
        <end position="384"/>
    </location>
</feature>
<feature type="helix" evidence="15">
    <location>
        <begin position="387"/>
        <end position="389"/>
    </location>
</feature>
<feature type="strand" evidence="15">
    <location>
        <begin position="403"/>
        <end position="410"/>
    </location>
</feature>
<feature type="strand" evidence="15">
    <location>
        <begin position="416"/>
        <end position="423"/>
    </location>
</feature>
<feature type="strand" evidence="15">
    <location>
        <begin position="425"/>
        <end position="429"/>
    </location>
</feature>
<feature type="strand" evidence="15">
    <location>
        <begin position="433"/>
        <end position="442"/>
    </location>
</feature>
<feature type="strand" evidence="15">
    <location>
        <begin position="448"/>
        <end position="465"/>
    </location>
</feature>
<feature type="helix" evidence="15">
    <location>
        <begin position="467"/>
        <end position="471"/>
    </location>
</feature>
<feature type="turn" evidence="15">
    <location>
        <begin position="472"/>
        <end position="475"/>
    </location>
</feature>
<feature type="strand" evidence="15">
    <location>
        <begin position="477"/>
        <end position="479"/>
    </location>
</feature>
<feature type="helix" evidence="15">
    <location>
        <begin position="480"/>
        <end position="493"/>
    </location>
</feature>
<feature type="helix" evidence="15">
    <location>
        <begin position="505"/>
        <end position="529"/>
    </location>
</feature>
<feature type="turn" evidence="15">
    <location>
        <begin position="541"/>
        <end position="543"/>
    </location>
</feature>
<feature type="helix" evidence="15">
    <location>
        <begin position="544"/>
        <end position="547"/>
    </location>
</feature>
<feature type="strand" evidence="15">
    <location>
        <begin position="556"/>
        <end position="560"/>
    </location>
</feature>
<feature type="helix" evidence="15">
    <location>
        <begin position="583"/>
        <end position="587"/>
    </location>
</feature>
<feature type="helix" evidence="15">
    <location>
        <begin position="594"/>
        <end position="596"/>
    </location>
</feature>
<feature type="strand" evidence="15">
    <location>
        <begin position="604"/>
        <end position="610"/>
    </location>
</feature>
<feature type="strand" evidence="15">
    <location>
        <begin position="612"/>
        <end position="622"/>
    </location>
</feature>
<feature type="helix" evidence="15">
    <location>
        <begin position="626"/>
        <end position="628"/>
    </location>
</feature>
<feature type="strand" evidence="15">
    <location>
        <begin position="632"/>
        <end position="637"/>
    </location>
</feature>
<feature type="helix" evidence="15">
    <location>
        <begin position="638"/>
        <end position="640"/>
    </location>
</feature>
<feature type="strand" evidence="15">
    <location>
        <begin position="645"/>
        <end position="648"/>
    </location>
</feature>
<feature type="strand" evidence="15">
    <location>
        <begin position="653"/>
        <end position="656"/>
    </location>
</feature>
<feature type="strand" evidence="15">
    <location>
        <begin position="659"/>
        <end position="661"/>
    </location>
</feature>
<feature type="strand" evidence="15">
    <location>
        <begin position="667"/>
        <end position="675"/>
    </location>
</feature>
<feature type="helix" evidence="15">
    <location>
        <begin position="676"/>
        <end position="684"/>
    </location>
</feature>
<feature type="strand" evidence="15">
    <location>
        <begin position="687"/>
        <end position="692"/>
    </location>
</feature>
<feature type="helix" evidence="15">
    <location>
        <begin position="699"/>
        <end position="705"/>
    </location>
</feature>
<feature type="strand" evidence="15">
    <location>
        <begin position="708"/>
        <end position="718"/>
    </location>
</feature>
<feature type="helix" evidence="15">
    <location>
        <begin position="720"/>
        <end position="726"/>
    </location>
</feature>
<feature type="strand" evidence="15">
    <location>
        <begin position="728"/>
        <end position="737"/>
    </location>
</feature>
<feature type="strand" evidence="15">
    <location>
        <begin position="749"/>
        <end position="754"/>
    </location>
</feature>
<feature type="strand" evidence="15">
    <location>
        <begin position="761"/>
        <end position="765"/>
    </location>
</feature>
<feature type="helix" evidence="15">
    <location>
        <begin position="770"/>
        <end position="781"/>
    </location>
</feature>
<feature type="helix" evidence="15">
    <location>
        <begin position="785"/>
        <end position="787"/>
    </location>
</feature>
<feature type="strand" evidence="15">
    <location>
        <begin position="788"/>
        <end position="793"/>
    </location>
</feature>
<feature type="turn" evidence="15">
    <location>
        <begin position="799"/>
        <end position="802"/>
    </location>
</feature>
<feature type="helix" evidence="15">
    <location>
        <begin position="807"/>
        <end position="820"/>
    </location>
</feature>
<feature type="strand" evidence="15">
    <location>
        <begin position="824"/>
        <end position="827"/>
    </location>
</feature>
<feature type="helix" evidence="15">
    <location>
        <begin position="830"/>
        <end position="837"/>
    </location>
</feature>
<feature type="strand" evidence="15">
    <location>
        <begin position="843"/>
        <end position="851"/>
    </location>
</feature>
<feature type="strand" evidence="15">
    <location>
        <begin position="857"/>
        <end position="871"/>
    </location>
</feature>
<feature type="helix" evidence="15">
    <location>
        <begin position="875"/>
        <end position="884"/>
    </location>
</feature>
<feature type="strand" evidence="15">
    <location>
        <begin position="893"/>
        <end position="903"/>
    </location>
</feature>
<feature type="turn" evidence="15">
    <location>
        <begin position="913"/>
        <end position="916"/>
    </location>
</feature>
<feature type="helix" evidence="15">
    <location>
        <begin position="917"/>
        <end position="935"/>
    </location>
</feature>
<feature type="helix" evidence="15">
    <location>
        <begin position="939"/>
        <end position="945"/>
    </location>
</feature>
<feature type="helix" evidence="15">
    <location>
        <begin position="965"/>
        <end position="976"/>
    </location>
</feature>
<feature type="helix" evidence="15">
    <location>
        <begin position="978"/>
        <end position="991"/>
    </location>
</feature>
<feature type="strand" evidence="15">
    <location>
        <begin position="993"/>
        <end position="1009"/>
    </location>
</feature>
<feature type="helix" evidence="15">
    <location>
        <begin position="1013"/>
        <end position="1015"/>
    </location>
</feature>
<feature type="strand" evidence="15">
    <location>
        <begin position="1017"/>
        <end position="1024"/>
    </location>
</feature>
<feature type="strand" evidence="15">
    <location>
        <begin position="1030"/>
        <end position="1035"/>
    </location>
</feature>
<feature type="strand" evidence="15">
    <location>
        <begin position="1039"/>
        <end position="1041"/>
    </location>
</feature>
<feature type="helix" evidence="15">
    <location>
        <begin position="1043"/>
        <end position="1055"/>
    </location>
</feature>
<feature type="helix" evidence="15">
    <location>
        <begin position="1059"/>
        <end position="1061"/>
    </location>
</feature>
<feature type="turn" evidence="15">
    <location>
        <begin position="1069"/>
        <end position="1071"/>
    </location>
</feature>
<feature type="helix" evidence="15">
    <location>
        <begin position="1083"/>
        <end position="1108"/>
    </location>
</feature>
<feature type="helix" evidence="15">
    <location>
        <begin position="1114"/>
        <end position="1123"/>
    </location>
</feature>
<feature type="strand" evidence="15">
    <location>
        <begin position="1129"/>
        <end position="1135"/>
    </location>
</feature>
<feature type="turn" evidence="15">
    <location>
        <begin position="1143"/>
        <end position="1146"/>
    </location>
</feature>
<feature type="strand" evidence="15">
    <location>
        <begin position="1152"/>
        <end position="1166"/>
    </location>
</feature>
<feature type="turn" evidence="15">
    <location>
        <begin position="1167"/>
        <end position="1169"/>
    </location>
</feature>
<feature type="strand" evidence="15">
    <location>
        <begin position="1172"/>
        <end position="1182"/>
    </location>
</feature>
<feature type="helix" evidence="15">
    <location>
        <begin position="1189"/>
        <end position="1208"/>
    </location>
</feature>
<feature type="turn" evidence="15">
    <location>
        <begin position="1225"/>
        <end position="1227"/>
    </location>
</feature>
<feature type="helix" evidence="15">
    <location>
        <begin position="1233"/>
        <end position="1235"/>
    </location>
</feature>
<feature type="strand" evidence="15">
    <location>
        <begin position="1238"/>
        <end position="1244"/>
    </location>
</feature>
<feature type="helix" evidence="15">
    <location>
        <begin position="1254"/>
        <end position="1256"/>
    </location>
</feature>
<feature type="helix" evidence="15">
    <location>
        <begin position="1263"/>
        <end position="1268"/>
    </location>
</feature>
<feature type="helix" evidence="15">
    <location>
        <begin position="1269"/>
        <end position="1286"/>
    </location>
</feature>
<feature type="helix" evidence="15">
    <location>
        <begin position="1303"/>
        <end position="1309"/>
    </location>
</feature>
<feature type="helix" evidence="15">
    <location>
        <begin position="1315"/>
        <end position="1317"/>
    </location>
</feature>
<proteinExistence type="evidence at protein level"/>
<organism>
    <name type="scientific">Homo sapiens</name>
    <name type="common">Human</name>
    <dbReference type="NCBI Taxonomy" id="9606"/>
    <lineage>
        <taxon>Eukaryota</taxon>
        <taxon>Metazoa</taxon>
        <taxon>Chordata</taxon>
        <taxon>Craniata</taxon>
        <taxon>Vertebrata</taxon>
        <taxon>Euteleostomi</taxon>
        <taxon>Mammalia</taxon>
        <taxon>Eutheria</taxon>
        <taxon>Euarchontoglires</taxon>
        <taxon>Primates</taxon>
        <taxon>Haplorrhini</taxon>
        <taxon>Catarrhini</taxon>
        <taxon>Hominidae</taxon>
        <taxon>Homo</taxon>
    </lineage>
</organism>
<dbReference type="EC" id="1.17.1.4" evidence="10"/>
<dbReference type="EC" id="1.17.3.2" evidence="8 10"/>
<dbReference type="EMBL" id="D11456">
    <property type="protein sequence ID" value="BAA02013.2"/>
    <property type="molecule type" value="mRNA"/>
</dbReference>
<dbReference type="EMBL" id="U06117">
    <property type="protein sequence ID" value="AAA75287.1"/>
    <property type="molecule type" value="mRNA"/>
</dbReference>
<dbReference type="EMBL" id="U39487">
    <property type="protein sequence ID" value="AAB08399.1"/>
    <property type="molecule type" value="mRNA"/>
</dbReference>
<dbReference type="EMBL" id="DQ089481">
    <property type="protein sequence ID" value="AAY68219.1"/>
    <property type="molecule type" value="Genomic_DNA"/>
</dbReference>
<dbReference type="CCDS" id="CCDS1775.1"/>
<dbReference type="PIR" id="S66573">
    <property type="entry name" value="XOHUDH"/>
</dbReference>
<dbReference type="RefSeq" id="NP_000370.2">
    <property type="nucleotide sequence ID" value="NM_000379.4"/>
</dbReference>
<dbReference type="PDB" id="2CKJ">
    <property type="method" value="X-ray"/>
    <property type="resolution" value="3.59 A"/>
    <property type="chains" value="A/B/C/D=2-1333"/>
</dbReference>
<dbReference type="PDB" id="2E1Q">
    <property type="method" value="X-ray"/>
    <property type="resolution" value="2.60 A"/>
    <property type="chains" value="A/B/C/D=1-1333"/>
</dbReference>
<dbReference type="PDBsum" id="2CKJ"/>
<dbReference type="PDBsum" id="2E1Q"/>
<dbReference type="SMR" id="P47989"/>
<dbReference type="BioGRID" id="113335">
    <property type="interactions" value="22"/>
</dbReference>
<dbReference type="CORUM" id="P47989"/>
<dbReference type="FunCoup" id="P47989">
    <property type="interactions" value="560"/>
</dbReference>
<dbReference type="IntAct" id="P47989">
    <property type="interactions" value="6"/>
</dbReference>
<dbReference type="STRING" id="9606.ENSP00000368727"/>
<dbReference type="BindingDB" id="P47989"/>
<dbReference type="ChEMBL" id="CHEMBL1929"/>
<dbReference type="DrugBank" id="DB03601">
    <property type="generic name" value="5-deoxyflavanone"/>
</dbReference>
<dbReference type="DrugBank" id="DB00640">
    <property type="generic name" value="Adenosine"/>
</dbReference>
<dbReference type="DrugBank" id="DB00041">
    <property type="generic name" value="Aldesleukin"/>
</dbReference>
<dbReference type="DrugBank" id="DB00437">
    <property type="generic name" value="Allopurinol"/>
</dbReference>
<dbReference type="DrugBank" id="DB00993">
    <property type="generic name" value="Azathioprine"/>
</dbReference>
<dbReference type="DrugBank" id="DB16101">
    <property type="generic name" value="Baicalein"/>
</dbReference>
<dbReference type="DrugBank" id="DB00958">
    <property type="generic name" value="Carboplatin"/>
</dbReference>
<dbReference type="DrugBank" id="DB01136">
    <property type="generic name" value="Carvedilol"/>
</dbReference>
<dbReference type="DrugBank" id="DB00856">
    <property type="generic name" value="Chlorphenesin"/>
</dbReference>
<dbReference type="DrugBank" id="DB17283">
    <property type="generic name" value="Chrysoeriol"/>
</dbReference>
<dbReference type="DrugBank" id="DB00515">
    <property type="generic name" value="Cisplatin"/>
</dbReference>
<dbReference type="DrugBank" id="DB11672">
    <property type="generic name" value="Curcumin"/>
</dbReference>
<dbReference type="DrugBank" id="DB00746">
    <property type="generic name" value="Deferoxamine"/>
</dbReference>
<dbReference type="DrugBank" id="DB03328">
    <property type="generic name" value="Dioxo(sulfanyl)molybdenum"/>
</dbReference>
<dbReference type="DrugBank" id="DB00997">
    <property type="generic name" value="Doxorubicin"/>
</dbReference>
<dbReference type="DrugBank" id="DB03516">
    <property type="generic name" value="Eniluracil"/>
</dbReference>
<dbReference type="DrugBank" id="DB12466">
    <property type="generic name" value="Favipiravir"/>
</dbReference>
<dbReference type="DrugBank" id="DB04854">
    <property type="generic name" value="Febuxostat"/>
</dbReference>
<dbReference type="DrugBank" id="DB03147">
    <property type="generic name" value="Flavin adenine dinucleotide"/>
</dbReference>
<dbReference type="DrugBank" id="DB16628">
    <property type="generic name" value="Fosdenopterin"/>
</dbReference>
<dbReference type="DrugBank" id="DB04335">
    <property type="generic name" value="Inosine"/>
</dbReference>
<dbReference type="DrugBank" id="DB01020">
    <property type="generic name" value="Isosorbide mononitrate"/>
</dbReference>
<dbReference type="DrugBank" id="DB00583">
    <property type="generic name" value="Levocarnitine"/>
</dbReference>
<dbReference type="DrugBank" id="DB00170">
    <property type="generic name" value="Menadione"/>
</dbReference>
<dbReference type="DrugBank" id="DB01033">
    <property type="generic name" value="Mercaptopurine"/>
</dbReference>
<dbReference type="DrugBank" id="DB00157">
    <property type="generic name" value="NADH"/>
</dbReference>
<dbReference type="DrugBank" id="DB03841">
    <property type="generic name" value="Niraxostat"/>
</dbReference>
<dbReference type="DrugBank" id="DB00336">
    <property type="generic name" value="Nitrofural"/>
</dbReference>
<dbReference type="DrugBank" id="DB01250">
    <property type="generic name" value="Olsalazine"/>
</dbReference>
<dbReference type="DrugBank" id="DB05262">
    <property type="generic name" value="Oxypurinol"/>
</dbReference>
<dbReference type="DrugBank" id="DB06478">
    <property type="generic name" value="Porfiromycin"/>
</dbReference>
<dbReference type="DrugBank" id="DB01168">
    <property type="generic name" value="Procarbazine"/>
</dbReference>
<dbReference type="DrugBank" id="DB00339">
    <property type="generic name" value="Pyrazinamide"/>
</dbReference>
<dbReference type="DrugBank" id="DB00127">
    <property type="generic name" value="Spermine"/>
</dbReference>
<dbReference type="DrugBank" id="DB01685">
    <property type="generic name" value="Topiroxostat"/>
</dbReference>
<dbReference type="DrugBank" id="DB00831">
    <property type="generic name" value="Trifluoperazine"/>
</dbReference>
<dbReference type="DrugCentral" id="P47989"/>
<dbReference type="GuidetoPHARMACOLOGY" id="2646"/>
<dbReference type="iPTMnet" id="P47989"/>
<dbReference type="PhosphoSitePlus" id="P47989"/>
<dbReference type="BioMuta" id="XDH"/>
<dbReference type="DMDM" id="2506326"/>
<dbReference type="jPOST" id="P47989"/>
<dbReference type="MassIVE" id="P47989"/>
<dbReference type="PaxDb" id="9606-ENSP00000368727"/>
<dbReference type="PeptideAtlas" id="P47989"/>
<dbReference type="ProteomicsDB" id="55829"/>
<dbReference type="Antibodypedia" id="4018">
    <property type="antibodies" value="277 antibodies from 35 providers"/>
</dbReference>
<dbReference type="DNASU" id="7498"/>
<dbReference type="Ensembl" id="ENST00000379416.4">
    <property type="protein sequence ID" value="ENSP00000368727.3"/>
    <property type="gene ID" value="ENSG00000158125.10"/>
</dbReference>
<dbReference type="GeneID" id="7498"/>
<dbReference type="KEGG" id="hsa:7498"/>
<dbReference type="MANE-Select" id="ENST00000379416.4">
    <property type="protein sequence ID" value="ENSP00000368727.3"/>
    <property type="RefSeq nucleotide sequence ID" value="NM_000379.4"/>
    <property type="RefSeq protein sequence ID" value="NP_000370.2"/>
</dbReference>
<dbReference type="UCSC" id="uc002rnv.2">
    <property type="organism name" value="human"/>
</dbReference>
<dbReference type="AGR" id="HGNC:12805"/>
<dbReference type="CTD" id="7498"/>
<dbReference type="DisGeNET" id="7498"/>
<dbReference type="GeneCards" id="XDH"/>
<dbReference type="HGNC" id="HGNC:12805">
    <property type="gene designation" value="XDH"/>
</dbReference>
<dbReference type="HPA" id="ENSG00000158125">
    <property type="expression patterns" value="Group enriched (breast, intestine, liver)"/>
</dbReference>
<dbReference type="MalaCards" id="XDH"/>
<dbReference type="MIM" id="278300">
    <property type="type" value="phenotype"/>
</dbReference>
<dbReference type="MIM" id="607633">
    <property type="type" value="gene"/>
</dbReference>
<dbReference type="neXtProt" id="NX_P47989"/>
<dbReference type="OpenTargets" id="ENSG00000158125"/>
<dbReference type="Orphanet" id="93601">
    <property type="disease" value="Xanthinuria type I"/>
</dbReference>
<dbReference type="PharmGKB" id="PA37404"/>
<dbReference type="VEuPathDB" id="HostDB:ENSG00000158125"/>
<dbReference type="eggNOG" id="KOG0430">
    <property type="taxonomic scope" value="Eukaryota"/>
</dbReference>
<dbReference type="GeneTree" id="ENSGT00950000183114"/>
<dbReference type="HOGENOM" id="CLU_001681_1_2_1"/>
<dbReference type="InParanoid" id="P47989"/>
<dbReference type="OMA" id="PHPTQER"/>
<dbReference type="OrthoDB" id="8300278at2759"/>
<dbReference type="PAN-GO" id="P47989">
    <property type="GO annotations" value="3 GO annotations based on evolutionary models"/>
</dbReference>
<dbReference type="PhylomeDB" id="P47989"/>
<dbReference type="TreeFam" id="TF353036"/>
<dbReference type="BioCyc" id="MetaCyc:HS08270-MONOMER"/>
<dbReference type="BRENDA" id="1.17.1.4">
    <property type="organism ID" value="2681"/>
</dbReference>
<dbReference type="BRENDA" id="1.17.3.2">
    <property type="organism ID" value="2681"/>
</dbReference>
<dbReference type="PathwayCommons" id="P47989"/>
<dbReference type="Reactome" id="R-HSA-74259">
    <property type="pathway name" value="Purine catabolism"/>
</dbReference>
<dbReference type="Reactome" id="R-HSA-8851680">
    <property type="pathway name" value="Butyrophilin (BTN) family interactions"/>
</dbReference>
<dbReference type="Reactome" id="R-HSA-9748787">
    <property type="pathway name" value="Azathioprine ADME"/>
</dbReference>
<dbReference type="SABIO-RK" id="P47989"/>
<dbReference type="SignaLink" id="P47989"/>
<dbReference type="BioGRID-ORCS" id="7498">
    <property type="hits" value="13 hits in 1155 CRISPR screens"/>
</dbReference>
<dbReference type="ChiTaRS" id="XDH">
    <property type="organism name" value="human"/>
</dbReference>
<dbReference type="EvolutionaryTrace" id="P47989"/>
<dbReference type="GeneWiki" id="Xanthine_dehydrogenase"/>
<dbReference type="GenomeRNAi" id="7498"/>
<dbReference type="Pharos" id="P47989">
    <property type="development level" value="Tclin"/>
</dbReference>
<dbReference type="PRO" id="PR:P47989"/>
<dbReference type="Proteomes" id="UP000005640">
    <property type="component" value="Chromosome 2"/>
</dbReference>
<dbReference type="RNAct" id="P47989">
    <property type="molecule type" value="protein"/>
</dbReference>
<dbReference type="Bgee" id="ENSG00000158125">
    <property type="expression patterns" value="Expressed in jejunal mucosa and 126 other cell types or tissues"/>
</dbReference>
<dbReference type="GO" id="GO:0005829">
    <property type="term" value="C:cytosol"/>
    <property type="evidence" value="ECO:0000314"/>
    <property type="project" value="MGI"/>
</dbReference>
<dbReference type="GO" id="GO:0005615">
    <property type="term" value="C:extracellular space"/>
    <property type="evidence" value="ECO:0007005"/>
    <property type="project" value="UniProtKB"/>
</dbReference>
<dbReference type="GO" id="GO:0005777">
    <property type="term" value="C:peroxisome"/>
    <property type="evidence" value="ECO:0007669"/>
    <property type="project" value="UniProtKB-SubCell"/>
</dbReference>
<dbReference type="GO" id="GO:0016529">
    <property type="term" value="C:sarcoplasmic reticulum"/>
    <property type="evidence" value="ECO:0007669"/>
    <property type="project" value="Ensembl"/>
</dbReference>
<dbReference type="GO" id="GO:0051537">
    <property type="term" value="F:2 iron, 2 sulfur cluster binding"/>
    <property type="evidence" value="ECO:0000314"/>
    <property type="project" value="UniProtKB"/>
</dbReference>
<dbReference type="GO" id="GO:0071949">
    <property type="term" value="F:FAD binding"/>
    <property type="evidence" value="ECO:0007669"/>
    <property type="project" value="InterPro"/>
</dbReference>
<dbReference type="GO" id="GO:0050660">
    <property type="term" value="F:flavin adenine dinucleotide binding"/>
    <property type="evidence" value="ECO:0000314"/>
    <property type="project" value="UniProtKB"/>
</dbReference>
<dbReference type="GO" id="GO:0070674">
    <property type="term" value="F:hypoxanthine dehydrogenase activity"/>
    <property type="evidence" value="ECO:0000314"/>
    <property type="project" value="MGI"/>
</dbReference>
<dbReference type="GO" id="GO:0070675">
    <property type="term" value="F:hypoxanthine oxidase activity"/>
    <property type="evidence" value="ECO:0007669"/>
    <property type="project" value="Ensembl"/>
</dbReference>
<dbReference type="GO" id="GO:0005506">
    <property type="term" value="F:iron ion binding"/>
    <property type="evidence" value="ECO:0007669"/>
    <property type="project" value="InterPro"/>
</dbReference>
<dbReference type="GO" id="GO:0043546">
    <property type="term" value="F:molybdopterin cofactor binding"/>
    <property type="evidence" value="ECO:0000314"/>
    <property type="project" value="UniProtKB"/>
</dbReference>
<dbReference type="GO" id="GO:0042803">
    <property type="term" value="F:protein homodimerization activity"/>
    <property type="evidence" value="ECO:0000353"/>
    <property type="project" value="UniProtKB"/>
</dbReference>
<dbReference type="GO" id="GO:0004854">
    <property type="term" value="F:xanthine dehydrogenase activity"/>
    <property type="evidence" value="ECO:0000314"/>
    <property type="project" value="UniProtKB"/>
</dbReference>
<dbReference type="GO" id="GO:0004855">
    <property type="term" value="F:xanthine oxidase activity"/>
    <property type="evidence" value="ECO:0000314"/>
    <property type="project" value="UniProtKB"/>
</dbReference>
<dbReference type="GO" id="GO:0006154">
    <property type="term" value="P:adenosine catabolic process"/>
    <property type="evidence" value="ECO:0007669"/>
    <property type="project" value="Ensembl"/>
</dbReference>
<dbReference type="GO" id="GO:0000255">
    <property type="term" value="P:allantoin metabolic process"/>
    <property type="evidence" value="ECO:0000314"/>
    <property type="project" value="MGI"/>
</dbReference>
<dbReference type="GO" id="GO:0043605">
    <property type="term" value="P:amide catabolic process"/>
    <property type="evidence" value="ECO:0007669"/>
    <property type="project" value="Ensembl"/>
</dbReference>
<dbReference type="GO" id="GO:0006196">
    <property type="term" value="P:AMP catabolic process"/>
    <property type="evidence" value="ECO:0000314"/>
    <property type="project" value="MGI"/>
</dbReference>
<dbReference type="GO" id="GO:0046059">
    <property type="term" value="P:dAMP catabolic process"/>
    <property type="evidence" value="ECO:0007669"/>
    <property type="project" value="Ensembl"/>
</dbReference>
<dbReference type="GO" id="GO:0006157">
    <property type="term" value="P:deoxyadenosine catabolic process"/>
    <property type="evidence" value="ECO:0007669"/>
    <property type="project" value="Ensembl"/>
</dbReference>
<dbReference type="GO" id="GO:0006161">
    <property type="term" value="P:deoxyguanosine catabolic process"/>
    <property type="evidence" value="ECO:0007669"/>
    <property type="project" value="Ensembl"/>
</dbReference>
<dbReference type="GO" id="GO:0006149">
    <property type="term" value="P:deoxyinosine catabolic process"/>
    <property type="evidence" value="ECO:0000314"/>
    <property type="project" value="MGI"/>
</dbReference>
<dbReference type="GO" id="GO:0046055">
    <property type="term" value="P:dGMP catabolic process"/>
    <property type="evidence" value="ECO:0007669"/>
    <property type="project" value="Ensembl"/>
</dbReference>
<dbReference type="GO" id="GO:0046038">
    <property type="term" value="P:GMP catabolic process"/>
    <property type="evidence" value="ECO:0007669"/>
    <property type="project" value="Ensembl"/>
</dbReference>
<dbReference type="GO" id="GO:0006147">
    <property type="term" value="P:guanine catabolic process"/>
    <property type="evidence" value="ECO:0007669"/>
    <property type="project" value="Ensembl"/>
</dbReference>
<dbReference type="GO" id="GO:0009114">
    <property type="term" value="P:hypoxanthine catabolic process"/>
    <property type="evidence" value="ECO:0000314"/>
    <property type="project" value="MGI"/>
</dbReference>
<dbReference type="GO" id="GO:0006204">
    <property type="term" value="P:IMP catabolic process"/>
    <property type="evidence" value="ECO:0000314"/>
    <property type="project" value="MGI"/>
</dbReference>
<dbReference type="GO" id="GO:0006148">
    <property type="term" value="P:inosine catabolic process"/>
    <property type="evidence" value="ECO:0000314"/>
    <property type="project" value="MGI"/>
</dbReference>
<dbReference type="GO" id="GO:0016226">
    <property type="term" value="P:iron-sulfur cluster assembly"/>
    <property type="evidence" value="ECO:0007669"/>
    <property type="project" value="Ensembl"/>
</dbReference>
<dbReference type="GO" id="GO:0007595">
    <property type="term" value="P:lactation"/>
    <property type="evidence" value="ECO:0007669"/>
    <property type="project" value="Ensembl"/>
</dbReference>
<dbReference type="GO" id="GO:0030856">
    <property type="term" value="P:regulation of epithelial cell differentiation"/>
    <property type="evidence" value="ECO:0007669"/>
    <property type="project" value="Ensembl"/>
</dbReference>
<dbReference type="GO" id="GO:0009115">
    <property type="term" value="P:xanthine catabolic process"/>
    <property type="evidence" value="ECO:0000314"/>
    <property type="project" value="UniProtKB"/>
</dbReference>
<dbReference type="FunFam" id="3.10.20.30:FF:000015">
    <property type="entry name" value="Aldehyde oxidase 1"/>
    <property type="match status" value="1"/>
</dbReference>
<dbReference type="FunFam" id="3.30.365.10:FF:000003">
    <property type="entry name" value="Aldehyde oxidase 1"/>
    <property type="match status" value="1"/>
</dbReference>
<dbReference type="FunFam" id="3.30.365.10:FF:000001">
    <property type="entry name" value="Xanthine dehydrogenase oxidase"/>
    <property type="match status" value="1"/>
</dbReference>
<dbReference type="FunFam" id="3.30.365.10:FF:000002">
    <property type="entry name" value="Xanthine dehydrogenase oxidase"/>
    <property type="match status" value="1"/>
</dbReference>
<dbReference type="FunFam" id="3.30.365.10:FF:000004">
    <property type="entry name" value="Xanthine dehydrogenase oxidase"/>
    <property type="match status" value="1"/>
</dbReference>
<dbReference type="FunFam" id="3.30.390.50:FF:000001">
    <property type="entry name" value="Xanthine dehydrogenase oxidase"/>
    <property type="match status" value="1"/>
</dbReference>
<dbReference type="FunFam" id="3.30.43.10:FF:000001">
    <property type="entry name" value="Xanthine dehydrogenase/oxidase"/>
    <property type="match status" value="1"/>
</dbReference>
<dbReference type="FunFam" id="3.30.465.10:FF:000004">
    <property type="entry name" value="Xanthine dehydrogenase/oxidase"/>
    <property type="match status" value="1"/>
</dbReference>
<dbReference type="FunFam" id="3.90.1170.50:FF:000002">
    <property type="entry name" value="Xanthine dehydrogenase/oxidase"/>
    <property type="match status" value="1"/>
</dbReference>
<dbReference type="FunFam" id="1.10.150.120:FF:000002">
    <property type="entry name" value="xanthine dehydrogenase/oxidase"/>
    <property type="match status" value="1"/>
</dbReference>
<dbReference type="FunFam" id="3.30.365.10:FF:000006">
    <property type="entry name" value="xanthine dehydrogenase/oxidase"/>
    <property type="match status" value="1"/>
</dbReference>
<dbReference type="Gene3D" id="3.10.20.30">
    <property type="match status" value="1"/>
</dbReference>
<dbReference type="Gene3D" id="3.30.465.10">
    <property type="match status" value="1"/>
</dbReference>
<dbReference type="Gene3D" id="1.10.150.120">
    <property type="entry name" value="[2Fe-2S]-binding domain"/>
    <property type="match status" value="1"/>
</dbReference>
<dbReference type="Gene3D" id="3.90.1170.50">
    <property type="entry name" value="Aldehyde oxidase/xanthine dehydrogenase, a/b hammerhead"/>
    <property type="match status" value="1"/>
</dbReference>
<dbReference type="Gene3D" id="3.30.365.10">
    <property type="entry name" value="Aldehyde oxidase/xanthine dehydrogenase, molybdopterin binding domain"/>
    <property type="match status" value="5"/>
</dbReference>
<dbReference type="Gene3D" id="3.30.390.50">
    <property type="entry name" value="CO dehydrogenase flavoprotein, C-terminal domain"/>
    <property type="match status" value="1"/>
</dbReference>
<dbReference type="Gene3D" id="3.30.43.10">
    <property type="entry name" value="Uridine Diphospho-n-acetylenolpyruvylglucosamine Reductase, domain 2"/>
    <property type="match status" value="1"/>
</dbReference>
<dbReference type="InterPro" id="IPR002888">
    <property type="entry name" value="2Fe-2S-bd"/>
</dbReference>
<dbReference type="InterPro" id="IPR036884">
    <property type="entry name" value="2Fe-2S-bd_dom_sf"/>
</dbReference>
<dbReference type="InterPro" id="IPR036010">
    <property type="entry name" value="2Fe-2S_ferredoxin-like_sf"/>
</dbReference>
<dbReference type="InterPro" id="IPR001041">
    <property type="entry name" value="2Fe-2S_ferredoxin-type"/>
</dbReference>
<dbReference type="InterPro" id="IPR006058">
    <property type="entry name" value="2Fe2S_fd_BS"/>
</dbReference>
<dbReference type="InterPro" id="IPR000674">
    <property type="entry name" value="Ald_Oxase/Xan_DH_a/b"/>
</dbReference>
<dbReference type="InterPro" id="IPR036856">
    <property type="entry name" value="Ald_Oxase/Xan_DH_a/b_sf"/>
</dbReference>
<dbReference type="InterPro" id="IPR016208">
    <property type="entry name" value="Ald_Oxase/xanthine_DH-like"/>
</dbReference>
<dbReference type="InterPro" id="IPR008274">
    <property type="entry name" value="AldOxase/xan_DH_MoCoBD1"/>
</dbReference>
<dbReference type="InterPro" id="IPR046867">
    <property type="entry name" value="AldOxase/xan_DH_MoCoBD2"/>
</dbReference>
<dbReference type="InterPro" id="IPR037165">
    <property type="entry name" value="AldOxase/xan_DH_Mopterin-bd_sf"/>
</dbReference>
<dbReference type="InterPro" id="IPR012675">
    <property type="entry name" value="Beta-grasp_dom_sf"/>
</dbReference>
<dbReference type="InterPro" id="IPR005107">
    <property type="entry name" value="CO_DH_flav_C"/>
</dbReference>
<dbReference type="InterPro" id="IPR036683">
    <property type="entry name" value="CO_DH_flav_C_dom_sf"/>
</dbReference>
<dbReference type="InterPro" id="IPR016166">
    <property type="entry name" value="FAD-bd_PCMH"/>
</dbReference>
<dbReference type="InterPro" id="IPR036318">
    <property type="entry name" value="FAD-bd_PCMH-like_sf"/>
</dbReference>
<dbReference type="InterPro" id="IPR016167">
    <property type="entry name" value="FAD-bd_PCMH_sub1"/>
</dbReference>
<dbReference type="InterPro" id="IPR016169">
    <property type="entry name" value="FAD-bd_PCMH_sub2"/>
</dbReference>
<dbReference type="InterPro" id="IPR002346">
    <property type="entry name" value="Mopterin_DH_FAD-bd"/>
</dbReference>
<dbReference type="InterPro" id="IPR022407">
    <property type="entry name" value="OxRdtase_Mopterin_BS"/>
</dbReference>
<dbReference type="InterPro" id="IPR014307">
    <property type="entry name" value="Xanthine_DH_ssu"/>
</dbReference>
<dbReference type="NCBIfam" id="TIGR02963">
    <property type="entry name" value="xanthine_xdhA"/>
    <property type="match status" value="1"/>
</dbReference>
<dbReference type="PANTHER" id="PTHR45444">
    <property type="entry name" value="XANTHINE DEHYDROGENASE"/>
    <property type="match status" value="1"/>
</dbReference>
<dbReference type="PANTHER" id="PTHR45444:SF3">
    <property type="entry name" value="XANTHINE DEHYDROGENASE"/>
    <property type="match status" value="1"/>
</dbReference>
<dbReference type="Pfam" id="PF01315">
    <property type="entry name" value="Ald_Xan_dh_C"/>
    <property type="match status" value="1"/>
</dbReference>
<dbReference type="Pfam" id="PF03450">
    <property type="entry name" value="CO_deh_flav_C"/>
    <property type="match status" value="1"/>
</dbReference>
<dbReference type="Pfam" id="PF00941">
    <property type="entry name" value="FAD_binding_5"/>
    <property type="match status" value="1"/>
</dbReference>
<dbReference type="Pfam" id="PF00111">
    <property type="entry name" value="Fer2"/>
    <property type="match status" value="1"/>
</dbReference>
<dbReference type="Pfam" id="PF01799">
    <property type="entry name" value="Fer2_2"/>
    <property type="match status" value="1"/>
</dbReference>
<dbReference type="Pfam" id="PF02738">
    <property type="entry name" value="MoCoBD_1"/>
    <property type="match status" value="1"/>
</dbReference>
<dbReference type="Pfam" id="PF20256">
    <property type="entry name" value="MoCoBD_2"/>
    <property type="match status" value="1"/>
</dbReference>
<dbReference type="PIRSF" id="PIRSF000127">
    <property type="entry name" value="Xanthine_DH"/>
    <property type="match status" value="1"/>
</dbReference>
<dbReference type="SMART" id="SM01008">
    <property type="entry name" value="Ald_Xan_dh_C"/>
    <property type="match status" value="1"/>
</dbReference>
<dbReference type="SMART" id="SM01092">
    <property type="entry name" value="CO_deh_flav_C"/>
    <property type="match status" value="1"/>
</dbReference>
<dbReference type="SUPFAM" id="SSF54292">
    <property type="entry name" value="2Fe-2S ferredoxin-like"/>
    <property type="match status" value="1"/>
</dbReference>
<dbReference type="SUPFAM" id="SSF55447">
    <property type="entry name" value="CO dehydrogenase flavoprotein C-terminal domain-like"/>
    <property type="match status" value="1"/>
</dbReference>
<dbReference type="SUPFAM" id="SSF47741">
    <property type="entry name" value="CO dehydrogenase ISP C-domain like"/>
    <property type="match status" value="1"/>
</dbReference>
<dbReference type="SUPFAM" id="SSF54665">
    <property type="entry name" value="CO dehydrogenase molybdoprotein N-domain-like"/>
    <property type="match status" value="1"/>
</dbReference>
<dbReference type="SUPFAM" id="SSF56176">
    <property type="entry name" value="FAD-binding/transporter-associated domain-like"/>
    <property type="match status" value="1"/>
</dbReference>
<dbReference type="SUPFAM" id="SSF56003">
    <property type="entry name" value="Molybdenum cofactor-binding domain"/>
    <property type="match status" value="1"/>
</dbReference>
<dbReference type="PROSITE" id="PS00197">
    <property type="entry name" value="2FE2S_FER_1"/>
    <property type="match status" value="1"/>
</dbReference>
<dbReference type="PROSITE" id="PS51085">
    <property type="entry name" value="2FE2S_FER_2"/>
    <property type="match status" value="1"/>
</dbReference>
<dbReference type="PROSITE" id="PS51387">
    <property type="entry name" value="FAD_PCMH"/>
    <property type="match status" value="1"/>
</dbReference>
<dbReference type="PROSITE" id="PS00559">
    <property type="entry name" value="MOLYBDOPTERIN_EUK"/>
    <property type="match status" value="1"/>
</dbReference>
<evidence type="ECO:0000250" key="1"/>
<evidence type="ECO:0000255" key="2">
    <source>
        <dbReference type="PROSITE-ProRule" id="PRU00465"/>
    </source>
</evidence>
<evidence type="ECO:0000255" key="3">
    <source>
        <dbReference type="PROSITE-ProRule" id="PRU00718"/>
    </source>
</evidence>
<evidence type="ECO:0000269" key="4">
    <source>
    </source>
</evidence>
<evidence type="ECO:0000269" key="5">
    <source>
    </source>
</evidence>
<evidence type="ECO:0000269" key="6">
    <source>
    </source>
</evidence>
<evidence type="ECO:0000269" key="7">
    <source>
    </source>
</evidence>
<evidence type="ECO:0000269" key="8">
    <source>
    </source>
</evidence>
<evidence type="ECO:0000269" key="9">
    <source>
    </source>
</evidence>
<evidence type="ECO:0000269" key="10">
    <source>
    </source>
</evidence>
<evidence type="ECO:0000269" key="11">
    <source>
    </source>
</evidence>
<evidence type="ECO:0000269" key="12">
    <source ref="12"/>
</evidence>
<evidence type="ECO:0000269" key="13">
    <source ref="6"/>
</evidence>
<evidence type="ECO:0000305" key="14"/>
<evidence type="ECO:0007829" key="15">
    <source>
        <dbReference type="PDB" id="2E1Q"/>
    </source>
</evidence>